<dbReference type="EMBL" id="U08299">
    <property type="protein sequence ID" value="AAC50088.1"/>
    <property type="molecule type" value="Genomic_DNA"/>
</dbReference>
<dbReference type="PIR" id="S53617">
    <property type="entry name" value="S53617"/>
</dbReference>
<dbReference type="BMRB" id="P61766"/>
<dbReference type="SMR" id="P61766"/>
<dbReference type="GlyCosmos" id="P61766">
    <property type="glycosylation" value="2 sites, No reported glycans"/>
</dbReference>
<dbReference type="GO" id="GO:0005794">
    <property type="term" value="C:Golgi apparatus"/>
    <property type="evidence" value="ECO:0007669"/>
    <property type="project" value="UniProtKB-SubCell"/>
</dbReference>
<dbReference type="GO" id="GO:0005886">
    <property type="term" value="C:plasma membrane"/>
    <property type="evidence" value="ECO:0007669"/>
    <property type="project" value="UniProtKB-SubCell"/>
</dbReference>
<dbReference type="GO" id="GO:0098552">
    <property type="term" value="C:side of membrane"/>
    <property type="evidence" value="ECO:0007669"/>
    <property type="project" value="UniProtKB-KW"/>
</dbReference>
<dbReference type="GO" id="GO:0005507">
    <property type="term" value="F:copper ion binding"/>
    <property type="evidence" value="ECO:0000250"/>
    <property type="project" value="UniProtKB"/>
</dbReference>
<dbReference type="GO" id="GO:0051260">
    <property type="term" value="P:protein homooligomerization"/>
    <property type="evidence" value="ECO:0007669"/>
    <property type="project" value="InterPro"/>
</dbReference>
<dbReference type="FunFam" id="1.10.790.10:FF:000001">
    <property type="entry name" value="Major prion protein"/>
    <property type="match status" value="1"/>
</dbReference>
<dbReference type="Gene3D" id="1.10.790.10">
    <property type="entry name" value="Prion/Doppel protein, beta-ribbon domain"/>
    <property type="match status" value="1"/>
</dbReference>
<dbReference type="InterPro" id="IPR000817">
    <property type="entry name" value="Prion"/>
</dbReference>
<dbReference type="InterPro" id="IPR036924">
    <property type="entry name" value="Prion/Doppel_b-ribbon_dom_sf"/>
</dbReference>
<dbReference type="InterPro" id="IPR022416">
    <property type="entry name" value="Prion/Doppel_prot_b-ribbon_dom"/>
</dbReference>
<dbReference type="InterPro" id="IPR020949">
    <property type="entry name" value="Prion_copper_b_octapeptide"/>
</dbReference>
<dbReference type="InterPro" id="IPR025860">
    <property type="entry name" value="Prion_N"/>
</dbReference>
<dbReference type="PANTHER" id="PTHR15506">
    <property type="entry name" value="DOPPEL PRION"/>
    <property type="match status" value="1"/>
</dbReference>
<dbReference type="PANTHER" id="PTHR15506:SF2">
    <property type="entry name" value="MAJOR PRION PROTEIN"/>
    <property type="match status" value="1"/>
</dbReference>
<dbReference type="Pfam" id="PF00377">
    <property type="entry name" value="Prion"/>
    <property type="match status" value="1"/>
</dbReference>
<dbReference type="Pfam" id="PF11587">
    <property type="entry name" value="Prion_bPrPp"/>
    <property type="match status" value="1"/>
</dbReference>
<dbReference type="Pfam" id="PF03991">
    <property type="entry name" value="Prion_octapep"/>
    <property type="match status" value="1"/>
</dbReference>
<dbReference type="PRINTS" id="PR00341">
    <property type="entry name" value="PRION"/>
</dbReference>
<dbReference type="SMART" id="SM00157">
    <property type="entry name" value="PRP"/>
    <property type="match status" value="1"/>
</dbReference>
<dbReference type="SUPFAM" id="SSF54098">
    <property type="entry name" value="Prion-like"/>
    <property type="match status" value="1"/>
</dbReference>
<dbReference type="PROSITE" id="PS00291">
    <property type="entry name" value="PRION_1"/>
    <property type="match status" value="1"/>
</dbReference>
<dbReference type="PROSITE" id="PS00706">
    <property type="entry name" value="PRION_2"/>
    <property type="match status" value="1"/>
</dbReference>
<feature type="signal peptide" evidence="1">
    <location>
        <begin position="1"/>
        <end position="22"/>
    </location>
</feature>
<feature type="chain" id="PRO_0000025677" description="Major prion protein">
    <location>
        <begin position="23"/>
        <end position="230"/>
    </location>
</feature>
<feature type="propeptide" id="PRO_0000025678" description="Removed in mature form" evidence="1">
    <location>
        <begin position="231"/>
        <end position="253"/>
    </location>
</feature>
<feature type="repeat" description="1">
    <location>
        <begin position="51"/>
        <end position="59"/>
    </location>
</feature>
<feature type="repeat" description="2">
    <location>
        <begin position="60"/>
        <end position="67"/>
    </location>
</feature>
<feature type="repeat" description="3">
    <location>
        <begin position="68"/>
        <end position="75"/>
    </location>
</feature>
<feature type="repeat" description="4">
    <location>
        <begin position="76"/>
        <end position="83"/>
    </location>
</feature>
<feature type="repeat" description="5">
    <location>
        <begin position="84"/>
        <end position="91"/>
    </location>
</feature>
<feature type="region of interest" description="Interaction with GRB2, ERI3 and SYN1" evidence="4">
    <location>
        <begin position="23"/>
        <end position="230"/>
    </location>
</feature>
<feature type="region of interest" description="Disordered" evidence="6">
    <location>
        <begin position="26"/>
        <end position="108"/>
    </location>
</feature>
<feature type="region of interest" description="5 X 8 AA tandem repeats of P-H-G-G-G-W-G-Q">
    <location>
        <begin position="51"/>
        <end position="91"/>
    </location>
</feature>
<feature type="compositionally biased region" description="Gly residues" evidence="6">
    <location>
        <begin position="52"/>
        <end position="95"/>
    </location>
</feature>
<feature type="binding site" evidence="2">
    <location>
        <position position="61"/>
    </location>
    <ligand>
        <name>Cu(2+)</name>
        <dbReference type="ChEBI" id="CHEBI:29036"/>
        <label>1</label>
    </ligand>
</feature>
<feature type="binding site" evidence="2">
    <location>
        <position position="62"/>
    </location>
    <ligand>
        <name>Cu(2+)</name>
        <dbReference type="ChEBI" id="CHEBI:29036"/>
        <label>1</label>
    </ligand>
</feature>
<feature type="binding site" evidence="2">
    <location>
        <position position="63"/>
    </location>
    <ligand>
        <name>Cu(2+)</name>
        <dbReference type="ChEBI" id="CHEBI:29036"/>
        <label>1</label>
    </ligand>
</feature>
<feature type="binding site" evidence="2">
    <location>
        <position position="69"/>
    </location>
    <ligand>
        <name>Cu(2+)</name>
        <dbReference type="ChEBI" id="CHEBI:29036"/>
        <label>2</label>
    </ligand>
</feature>
<feature type="binding site" evidence="2">
    <location>
        <position position="70"/>
    </location>
    <ligand>
        <name>Cu(2+)</name>
        <dbReference type="ChEBI" id="CHEBI:29036"/>
        <label>2</label>
    </ligand>
</feature>
<feature type="binding site" evidence="2">
    <location>
        <position position="71"/>
    </location>
    <ligand>
        <name>Cu(2+)</name>
        <dbReference type="ChEBI" id="CHEBI:29036"/>
        <label>2</label>
    </ligand>
</feature>
<feature type="binding site" evidence="2">
    <location>
        <position position="77"/>
    </location>
    <ligand>
        <name>Cu(2+)</name>
        <dbReference type="ChEBI" id="CHEBI:29036"/>
        <label>3</label>
    </ligand>
</feature>
<feature type="binding site" evidence="2">
    <location>
        <position position="78"/>
    </location>
    <ligand>
        <name>Cu(2+)</name>
        <dbReference type="ChEBI" id="CHEBI:29036"/>
        <label>3</label>
    </ligand>
</feature>
<feature type="binding site" evidence="2">
    <location>
        <position position="79"/>
    </location>
    <ligand>
        <name>Cu(2+)</name>
        <dbReference type="ChEBI" id="CHEBI:29036"/>
        <label>3</label>
    </ligand>
</feature>
<feature type="binding site" evidence="2">
    <location>
        <position position="85"/>
    </location>
    <ligand>
        <name>Cu(2+)</name>
        <dbReference type="ChEBI" id="CHEBI:29036"/>
        <label>4</label>
    </ligand>
</feature>
<feature type="binding site" evidence="2">
    <location>
        <position position="86"/>
    </location>
    <ligand>
        <name>Cu(2+)</name>
        <dbReference type="ChEBI" id="CHEBI:29036"/>
        <label>4</label>
    </ligand>
</feature>
<feature type="binding site" evidence="2">
    <location>
        <position position="87"/>
    </location>
    <ligand>
        <name>Cu(2+)</name>
        <dbReference type="ChEBI" id="CHEBI:29036"/>
        <label>4</label>
    </ligand>
</feature>
<feature type="lipid moiety-binding region" description="GPI-anchor amidated serine" evidence="3">
    <location>
        <position position="230"/>
    </location>
</feature>
<feature type="glycosylation site" description="N-linked (GlcNAc...) asparagine" evidence="5">
    <location>
        <position position="181"/>
    </location>
</feature>
<feature type="glycosylation site" description="N-linked (GlcNAc...) asparagine" evidence="5">
    <location>
        <position position="197"/>
    </location>
</feature>
<feature type="disulfide bond" evidence="3">
    <location>
        <begin position="179"/>
        <end position="214"/>
    </location>
</feature>
<gene>
    <name type="primary">PRNP</name>
    <name type="synonym">PRP</name>
</gene>
<accession>P61766</accession>
<accession>P40253</accession>
<keyword id="KW-0034">Amyloid</keyword>
<keyword id="KW-1003">Cell membrane</keyword>
<keyword id="KW-0186">Copper</keyword>
<keyword id="KW-1015">Disulfide bond</keyword>
<keyword id="KW-0325">Glycoprotein</keyword>
<keyword id="KW-0333">Golgi apparatus</keyword>
<keyword id="KW-0336">GPI-anchor</keyword>
<keyword id="KW-0449">Lipoprotein</keyword>
<keyword id="KW-0472">Membrane</keyword>
<keyword id="KW-0479">Metal-binding</keyword>
<keyword id="KW-0640">Prion</keyword>
<keyword id="KW-0677">Repeat</keyword>
<keyword id="KW-0732">Signal</keyword>
<keyword id="KW-0862">Zinc</keyword>
<protein>
    <recommendedName>
        <fullName>Major prion protein</fullName>
        <shortName>PrP</shortName>
    </recommendedName>
    <alternativeName>
        <fullName>PrP27-30</fullName>
    </alternativeName>
    <alternativeName>
        <fullName>PrP33-35C</fullName>
    </alternativeName>
    <cdAntigenName>CD230</cdAntigenName>
</protein>
<organism>
    <name type="scientific">Hylobates lar</name>
    <name type="common">Lar gibbon</name>
    <name type="synonym">White-handed gibbon</name>
    <dbReference type="NCBI Taxonomy" id="9580"/>
    <lineage>
        <taxon>Eukaryota</taxon>
        <taxon>Metazoa</taxon>
        <taxon>Chordata</taxon>
        <taxon>Craniata</taxon>
        <taxon>Vertebrata</taxon>
        <taxon>Euteleostomi</taxon>
        <taxon>Mammalia</taxon>
        <taxon>Eutheria</taxon>
        <taxon>Euarchontoglires</taxon>
        <taxon>Primates</taxon>
        <taxon>Haplorrhini</taxon>
        <taxon>Catarrhini</taxon>
        <taxon>Hylobatidae</taxon>
        <taxon>Hylobates</taxon>
    </lineage>
</organism>
<reference key="1">
    <citation type="journal article" date="1995" name="J. Mol. Biol.">
        <title>Prion protein gene variation among primates.</title>
        <authorList>
            <person name="Schaetzl H.M."/>
            <person name="Da Costa M."/>
            <person name="Taylor L."/>
            <person name="Cohen F.E."/>
            <person name="Prusiner S.B."/>
        </authorList>
    </citation>
    <scope>NUCLEOTIDE SEQUENCE [GENOMIC DNA]</scope>
</reference>
<sequence>MANLGCWMLVLFVATWSDLGLCKKRPKPGGWNTGGSRYPGQGSPGGNRYPPQGGGGWGQPHGGGWGQPHGGGWGQPHGGGWGQPHGGGWGQGGGTHSQWNKPSKPKTNMKHMAGAAAAGAVVGGLGGYMLGSAMSRPIIHFGSDYEDRYYRENMHRYPNQVYYRPMDQYSSQNNFVHDCVNITIKQHTVTTTTKGENFTETDVKMMERVVEQMCITQYERESQAYYQRGSSMVLFSSPPVILLISFLIFLIVG</sequence>
<name>PRIO_HYLLA</name>
<proteinExistence type="inferred from homology"/>
<comment type="function">
    <text evidence="2 4">Its primary physiological function is unclear. Has cytoprotective activity against internal or environmental stresses. May play a role in neuronal development and synaptic plasticity. May be required for neuronal myelin sheath maintenance. May play a role in iron uptake and iron homeostasis. Soluble oligomers are toxic to cultured neuroblastoma cells and induce apoptosis (in vitro). Association with GPC1 (via its heparan sulfate chains) targets PRNP to lipid rafts. Also provides Cu(2+) or Zn(2+) for the ascorbate-mediated GPC1 deaminase degradation of its heparan sulfate side chains (By similarity).</text>
</comment>
<comment type="subunit">
    <text evidence="2 4">Monomer and homodimer. Has a tendency to aggregate into amyloid fibrils containing a cross-beta spine, formed by a steric zipper of superposed beta-strands. Soluble oligomers may represent an intermediate stage on the path to fibril formation. Copper binding may promote oligomerization. Interacts with GRB2, APP, ERI3/PRNPIP and SYN1. Mislocalized cytosolically exposed PrP interacts with MGRN1; this interaction alters MGRN1 subcellular location and causes lysosomal enlargement. Interacts with KIAA1191.</text>
</comment>
<comment type="subcellular location">
    <subcellularLocation>
        <location evidence="2">Cell membrane</location>
        <topology evidence="2">Lipid-anchor</topology>
        <topology evidence="2">GPI-anchor</topology>
    </subcellularLocation>
    <subcellularLocation>
        <location evidence="4">Golgi apparatus</location>
    </subcellularLocation>
    <text evidence="2">Targeted to lipid rafts via association with the heparan sulfate chains of GPC1. Colocates, in the presence of Cu(2+), to vesicles in para- and perinuclear regions, where both proteins undergo internalization. Heparin displaces PRNP from lipid rafts and promotes endocytosis.</text>
</comment>
<comment type="domain">
    <text evidence="2">The normal, monomeric form has a mainly alpha-helical structure. The disease-associated, protease-resistant form forms amyloid fibrils containing a cross-beta spine, formed by a steric zipper of superposed beta-strands. Disease mutations may favor intermolecular contacts via short beta strands, and may thereby trigger oligomerization.</text>
</comment>
<comment type="domain">
    <text evidence="2">Contains an N-terminal region composed of octamer repeats. At low copper concentrations, the sidechains of His residues from three or four repeats contribute to the binding of a single copper ion. Alternatively, a copper ion can be bound by interaction with the sidechain and backbone amide nitrogen of a single His residue. The observed copper binding stoichiometry suggests that two repeat regions cooperate to stabilize the binding of a single copper ion. At higher copper concentrations, each octamer can bind one copper ion by interactions with the His sidechain and Gly backbone atoms. A mixture of binding types may occur, especially in the case of octamer repeat expansion. Copper binding may stabilize the conformation of this region and may promote oligomerization.</text>
</comment>
<comment type="disease">
    <text evidence="7">PrP is found in high quantity in the brain of humans and animals infected with the degenerative neurological diseases kuru, Creutzfeldt-Jakob disease (CJD), Gerstmann-Straussler syndrome (GSS), scrapie, bovine spongiform encephalopathy (BSE), transmissible mink encephalopathy (TME), etc.</text>
</comment>
<comment type="similarity">
    <text evidence="7">Belongs to the prion family.</text>
</comment>
<evidence type="ECO:0000250" key="1"/>
<evidence type="ECO:0000250" key="2">
    <source>
        <dbReference type="UniProtKB" id="P04156"/>
    </source>
</evidence>
<evidence type="ECO:0000250" key="3">
    <source>
        <dbReference type="UniProtKB" id="P04273"/>
    </source>
</evidence>
<evidence type="ECO:0000250" key="4">
    <source>
        <dbReference type="UniProtKB" id="P04925"/>
    </source>
</evidence>
<evidence type="ECO:0000255" key="5"/>
<evidence type="ECO:0000256" key="6">
    <source>
        <dbReference type="SAM" id="MobiDB-lite"/>
    </source>
</evidence>
<evidence type="ECO:0000305" key="7"/>